<accession>P16421</accession>
<protein>
    <recommendedName>
        <fullName>Soluble hydrogenase 42 kDa subunit</fullName>
        <ecNumber>1.12.-.-</ecNumber>
    </recommendedName>
    <alternativeName>
        <fullName>Tritium exchange subunit</fullName>
    </alternativeName>
</protein>
<name>DHSS_ANACY</name>
<dbReference type="EC" id="1.12.-.-"/>
<dbReference type="EMBL" id="X17482">
    <property type="protein sequence ID" value="CAA35518.1"/>
    <property type="molecule type" value="Genomic_DNA"/>
</dbReference>
<dbReference type="PIR" id="S07767">
    <property type="entry name" value="S07767"/>
</dbReference>
<dbReference type="SMR" id="P16421"/>
<dbReference type="OMA" id="YEWDTPA"/>
<dbReference type="GO" id="GO:0005737">
    <property type="term" value="C:cytoplasm"/>
    <property type="evidence" value="ECO:0007669"/>
    <property type="project" value="UniProtKB-SubCell"/>
</dbReference>
<dbReference type="GO" id="GO:0008453">
    <property type="term" value="F:alanine-glyoxylate transaminase activity"/>
    <property type="evidence" value="ECO:0007669"/>
    <property type="project" value="TreeGrafter"/>
</dbReference>
<dbReference type="GO" id="GO:0004760">
    <property type="term" value="F:L-serine-pyruvate transaminase activity"/>
    <property type="evidence" value="ECO:0007669"/>
    <property type="project" value="TreeGrafter"/>
</dbReference>
<dbReference type="GO" id="GO:0016491">
    <property type="term" value="F:oxidoreductase activity"/>
    <property type="evidence" value="ECO:0007669"/>
    <property type="project" value="UniProtKB-KW"/>
</dbReference>
<dbReference type="GO" id="GO:0019265">
    <property type="term" value="P:glycine biosynthetic process, by transamination of glyoxylate"/>
    <property type="evidence" value="ECO:0007669"/>
    <property type="project" value="TreeGrafter"/>
</dbReference>
<dbReference type="FunFam" id="3.40.640.10:FF:000054">
    <property type="entry name" value="Serine--glyoxylate aminotransferase"/>
    <property type="match status" value="1"/>
</dbReference>
<dbReference type="Gene3D" id="3.90.1150.10">
    <property type="entry name" value="Aspartate Aminotransferase, domain 1"/>
    <property type="match status" value="1"/>
</dbReference>
<dbReference type="Gene3D" id="3.40.640.10">
    <property type="entry name" value="Type I PLP-dependent aspartate aminotransferase-like (Major domain)"/>
    <property type="match status" value="1"/>
</dbReference>
<dbReference type="InterPro" id="IPR000192">
    <property type="entry name" value="Aminotrans_V_dom"/>
</dbReference>
<dbReference type="InterPro" id="IPR020578">
    <property type="entry name" value="Aminotrans_V_PyrdxlP_BS"/>
</dbReference>
<dbReference type="InterPro" id="IPR015424">
    <property type="entry name" value="PyrdxlP-dep_Trfase"/>
</dbReference>
<dbReference type="InterPro" id="IPR015421">
    <property type="entry name" value="PyrdxlP-dep_Trfase_major"/>
</dbReference>
<dbReference type="InterPro" id="IPR015422">
    <property type="entry name" value="PyrdxlP-dep_Trfase_small"/>
</dbReference>
<dbReference type="InterPro" id="IPR024169">
    <property type="entry name" value="SP_NH2Trfase/AEP_transaminase"/>
</dbReference>
<dbReference type="PANTHER" id="PTHR21152:SF40">
    <property type="entry name" value="ALANINE--GLYOXYLATE AMINOTRANSFERASE"/>
    <property type="match status" value="1"/>
</dbReference>
<dbReference type="PANTHER" id="PTHR21152">
    <property type="entry name" value="AMINOTRANSFERASE CLASS V"/>
    <property type="match status" value="1"/>
</dbReference>
<dbReference type="Pfam" id="PF00266">
    <property type="entry name" value="Aminotran_5"/>
    <property type="match status" value="1"/>
</dbReference>
<dbReference type="PIRSF" id="PIRSF000524">
    <property type="entry name" value="SPT"/>
    <property type="match status" value="1"/>
</dbReference>
<dbReference type="SUPFAM" id="SSF53383">
    <property type="entry name" value="PLP-dependent transferases"/>
    <property type="match status" value="1"/>
</dbReference>
<dbReference type="PROSITE" id="PS00595">
    <property type="entry name" value="AA_TRANSFER_CLASS_5"/>
    <property type="match status" value="1"/>
</dbReference>
<feature type="chain" id="PRO_0000150242" description="Soluble hydrogenase 42 kDa subunit">
    <location>
        <begin position="1"/>
        <end position="383"/>
    </location>
</feature>
<feature type="modified residue" description="N6-(pyridoxal phosphate)lysine" evidence="1">
    <location>
        <position position="194"/>
    </location>
</feature>
<proteinExistence type="evidence at protein level"/>
<sequence>MDDKLMLMIPGPTPVPEAALLALAKHPIGHRTSEFSNMMGEVTQNLKWLHQTESDVLMLNVSGTGAVEAGMINFLSPGDRILVGSNGKFGERWVEVGQAFGLNVEAITAEWGQPLDPDKFAQKLQADTNKEIKAVIITHSETSTGVINDLVAINSHVKEHGQALIIVDAVTSLGAYNVPVDALGLDVVASGSQKGYMIPPGLGFVSVSPKAWEAYKTAKLPKYYLDLGKYRKATAKNTTPFTPPVNLMVALHTTLGMMKKEGLESIFTRHERQKNATRAAMKALNLPLFAADECASPAITAVATPGMEADKIRSLMKKRFDIALAGGQDHLSNKIFRVGHLGFVSDRDILSCIASLEVVLLELGHENFNSGAGVAAAARVFSN</sequence>
<keyword id="KW-0963">Cytoplasm</keyword>
<keyword id="KW-0903">Direct protein sequencing</keyword>
<keyword id="KW-0560">Oxidoreductase</keyword>
<keyword id="KW-0663">Pyridoxal phosphate</keyword>
<organism>
    <name type="scientific">Anabaena cylindrica</name>
    <dbReference type="NCBI Taxonomy" id="1165"/>
    <lineage>
        <taxon>Bacteria</taxon>
        <taxon>Bacillati</taxon>
        <taxon>Cyanobacteriota</taxon>
        <taxon>Cyanophyceae</taxon>
        <taxon>Nostocales</taxon>
        <taxon>Nostocaceae</taxon>
        <taxon>Anabaena</taxon>
    </lineage>
</organism>
<evidence type="ECO:0000250" key="1"/>
<evidence type="ECO:0000305" key="2"/>
<comment type="function">
    <text>Soluble hydrogenase catalyzes both production and consumption of hydrogen from suitable artificial electron donors or acceptors. This subunit catalyzes the tritium-exchange activity.</text>
</comment>
<comment type="cofactor">
    <cofactor evidence="1">
        <name>pyridoxal 5'-phosphate</name>
        <dbReference type="ChEBI" id="CHEBI:597326"/>
    </cofactor>
</comment>
<comment type="subunit">
    <text>Heterodimer of a large and a small subunit.</text>
</comment>
<comment type="subcellular location">
    <subcellularLocation>
        <location>Cytoplasm</location>
    </subcellularLocation>
</comment>
<comment type="similarity">
    <text evidence="2">Belongs to the class-V pyridoxal-phosphate-dependent aminotransferase family.</text>
</comment>
<reference key="1">
    <citation type="journal article" date="1990" name="Eur. J. Biochem.">
        <title>Soluble hydrogenase of Anabaena cylindrica. Cloning and sequencing of a potential gene encoding the tritium exchange subunit.</title>
        <authorList>
            <person name="Ewart G.D."/>
            <person name="Reed K.C."/>
            <person name="Smith G.D."/>
        </authorList>
    </citation>
    <scope>NUCLEOTIDE SEQUENCE [GENOMIC DNA]</scope>
    <scope>PROTEIN SEQUENCE OF 1-13</scope>
</reference>